<name>SMC6_YEAST</name>
<organism>
    <name type="scientific">Saccharomyces cerevisiae (strain ATCC 204508 / S288c)</name>
    <name type="common">Baker's yeast</name>
    <dbReference type="NCBI Taxonomy" id="559292"/>
    <lineage>
        <taxon>Eukaryota</taxon>
        <taxon>Fungi</taxon>
        <taxon>Dikarya</taxon>
        <taxon>Ascomycota</taxon>
        <taxon>Saccharomycotina</taxon>
        <taxon>Saccharomycetes</taxon>
        <taxon>Saccharomycetales</taxon>
        <taxon>Saccharomycetaceae</taxon>
        <taxon>Saccharomyces</taxon>
    </lineage>
</organism>
<gene>
    <name type="primary">SMC6</name>
    <name type="synonym">RHC18</name>
    <name type="ordered locus">YLR383W</name>
    <name type="ORF">L3502.2</name>
</gene>
<protein>
    <recommendedName>
        <fullName>Structural maintenance of chromosomes protein 6</fullName>
    </recommendedName>
    <alternativeName>
        <fullName>DNA repair protein RHC18</fullName>
    </alternativeName>
    <alternativeName>
        <fullName>Rad18 homolog</fullName>
    </alternativeName>
</protein>
<evidence type="ECO:0000250" key="1"/>
<evidence type="ECO:0000255" key="2"/>
<evidence type="ECO:0000256" key="3">
    <source>
        <dbReference type="SAM" id="MobiDB-lite"/>
    </source>
</evidence>
<evidence type="ECO:0000269" key="4">
    <source>
    </source>
</evidence>
<evidence type="ECO:0000269" key="5">
    <source>
    </source>
</evidence>
<evidence type="ECO:0000269" key="6">
    <source>
    </source>
</evidence>
<evidence type="ECO:0000305" key="7"/>
<evidence type="ECO:0007829" key="8">
    <source>
        <dbReference type="PDB" id="8HQS"/>
    </source>
</evidence>
<reference key="1">
    <citation type="journal article" date="1995" name="Mol. Cell. Biol.">
        <title>The rad18 gene of Schizosaccharomyces pombe defines a new subgroup of the SMC superfamily involved in DNA repair.</title>
        <authorList>
            <person name="Lehmann A.R."/>
            <person name="Walicka M."/>
            <person name="Griffiths D.J.F."/>
            <person name="Murray J.M."/>
            <person name="Watts F.Z."/>
            <person name="McCready S."/>
            <person name="Carr A.M."/>
        </authorList>
    </citation>
    <scope>NUCLEOTIDE SEQUENCE [GENOMIC DNA]</scope>
</reference>
<reference key="2">
    <citation type="journal article" date="1997" name="Nature">
        <title>The nucleotide sequence of Saccharomyces cerevisiae chromosome XII.</title>
        <authorList>
            <person name="Johnston M."/>
            <person name="Hillier L.W."/>
            <person name="Riles L."/>
            <person name="Albermann K."/>
            <person name="Andre B."/>
            <person name="Ansorge W."/>
            <person name="Benes V."/>
            <person name="Brueckner M."/>
            <person name="Delius H."/>
            <person name="Dubois E."/>
            <person name="Duesterhoeft A."/>
            <person name="Entian K.-D."/>
            <person name="Floeth M."/>
            <person name="Goffeau A."/>
            <person name="Hebling U."/>
            <person name="Heumann K."/>
            <person name="Heuss-Neitzel D."/>
            <person name="Hilbert H."/>
            <person name="Hilger F."/>
            <person name="Kleine K."/>
            <person name="Koetter P."/>
            <person name="Louis E.J."/>
            <person name="Messenguy F."/>
            <person name="Mewes H.-W."/>
            <person name="Miosga T."/>
            <person name="Moestl D."/>
            <person name="Mueller-Auer S."/>
            <person name="Nentwich U."/>
            <person name="Obermaier B."/>
            <person name="Piravandi E."/>
            <person name="Pohl T.M."/>
            <person name="Portetelle D."/>
            <person name="Purnelle B."/>
            <person name="Rechmann S."/>
            <person name="Rieger M."/>
            <person name="Rinke M."/>
            <person name="Rose M."/>
            <person name="Scharfe M."/>
            <person name="Scherens B."/>
            <person name="Scholler P."/>
            <person name="Schwager C."/>
            <person name="Schwarz S."/>
            <person name="Underwood A.P."/>
            <person name="Urrestarazu L.A."/>
            <person name="Vandenbol M."/>
            <person name="Verhasselt P."/>
            <person name="Vierendeels F."/>
            <person name="Voet M."/>
            <person name="Volckaert G."/>
            <person name="Voss H."/>
            <person name="Wambutt R."/>
            <person name="Wedler E."/>
            <person name="Wedler H."/>
            <person name="Zimmermann F.K."/>
            <person name="Zollner A."/>
            <person name="Hani J."/>
            <person name="Hoheisel J.D."/>
        </authorList>
    </citation>
    <scope>NUCLEOTIDE SEQUENCE [LARGE SCALE GENOMIC DNA]</scope>
    <source>
        <strain>ATCC 204508 / S288c</strain>
    </source>
</reference>
<reference key="3">
    <citation type="journal article" date="2014" name="G3 (Bethesda)">
        <title>The reference genome sequence of Saccharomyces cerevisiae: Then and now.</title>
        <authorList>
            <person name="Engel S.R."/>
            <person name="Dietrich F.S."/>
            <person name="Fisk D.G."/>
            <person name="Binkley G."/>
            <person name="Balakrishnan R."/>
            <person name="Costanzo M.C."/>
            <person name="Dwight S.S."/>
            <person name="Hitz B.C."/>
            <person name="Karra K."/>
            <person name="Nash R.S."/>
            <person name="Weng S."/>
            <person name="Wong E.D."/>
            <person name="Lloyd P."/>
            <person name="Skrzypek M.S."/>
            <person name="Miyasato S.R."/>
            <person name="Simison M."/>
            <person name="Cherry J.M."/>
        </authorList>
    </citation>
    <scope>GENOME REANNOTATION</scope>
    <source>
        <strain>ATCC 204508 / S288c</strain>
    </source>
</reference>
<reference key="4">
    <citation type="journal article" date="1987" name="EMBO J.">
        <title>Three suppressor mutations which cure a mitochondrial RNA maturase deficiency occur at the same codon in the open reading frame of the nuclear NAM2 gene.</title>
        <authorList>
            <person name="Labouesse M."/>
            <person name="Herbert C.J."/>
            <person name="Dujardin G."/>
            <person name="Slonimski P.P."/>
        </authorList>
    </citation>
    <scope>NUCLEOTIDE SEQUENCE [GENOMIC DNA] OF 1-184</scope>
    <source>
        <strain>AB1-4A/8/55</strain>
    </source>
</reference>
<reference key="5">
    <citation type="journal article" date="2003" name="Mol. Cell">
        <title>Assigning function to yeast proteins by integration of technologies.</title>
        <authorList>
            <person name="Hazbun T.R."/>
            <person name="Malmstroem L."/>
            <person name="Anderson S."/>
            <person name="Graczyk B.J."/>
            <person name="Fox B."/>
            <person name="Riffle M."/>
            <person name="Sundin B.A."/>
            <person name="Aranda J.D."/>
            <person name="McDonald W.H."/>
            <person name="Chiu C.-H."/>
            <person name="Snydsman B.E."/>
            <person name="Bradley P."/>
            <person name="Muller E.G.D."/>
            <person name="Fields S."/>
            <person name="Baker D."/>
            <person name="Yates J.R. III"/>
            <person name="Davis T.N."/>
        </authorList>
    </citation>
    <scope>IDENTIFICATION BY MASS SPECTROMETRY</scope>
</reference>
<reference key="6">
    <citation type="journal article" date="2003" name="Nature">
        <title>Global analysis of protein expression in yeast.</title>
        <authorList>
            <person name="Ghaemmaghami S."/>
            <person name="Huh W.-K."/>
            <person name="Bower K."/>
            <person name="Howson R.W."/>
            <person name="Belle A."/>
            <person name="Dephoure N."/>
            <person name="O'Shea E.K."/>
            <person name="Weissman J.S."/>
        </authorList>
    </citation>
    <scope>LEVEL OF PROTEIN EXPRESSION [LARGE SCALE ANALYSIS]</scope>
</reference>
<reference key="7">
    <citation type="journal article" date="2004" name="DNA Repair">
        <title>SMC6 is required for MMS-induced interchromosomal and sister chromatid recombinations in Saccharomyces cerevisiae.</title>
        <authorList>
            <person name="Onoda F."/>
            <person name="Takeda M."/>
            <person name="Seki M."/>
            <person name="Maeda D."/>
            <person name="Tajima J."/>
            <person name="Ui A."/>
            <person name="Yagi H."/>
            <person name="Enomoto T."/>
        </authorList>
    </citation>
    <scope>FUNCTION</scope>
</reference>
<reference key="8">
    <citation type="journal article" date="2005" name="Proc. Natl. Acad. Sci. U.S.A.">
        <title>A SUMO ligase is part of a nuclear multiprotein complex that affects DNA repair and chromosomal organization.</title>
        <authorList>
            <person name="Zhao X."/>
            <person name="Blobel G."/>
        </authorList>
    </citation>
    <scope>SUBUNIT</scope>
</reference>
<comment type="function">
    <text evidence="5">Acts in a DNA repair pathway for removal of UV-induced DNA damage that is distinct from classical nucleotide excision repair and in repair of ionizing radiation damage. Functions in homologous recombination repair of DNA double strand breaks and in recovery of stalled replication forks. Probably plays a role in structure.</text>
</comment>
<comment type="subunit">
    <text evidence="6">Component of the Smc5-Smc6 complex which consists of KRE29, MMS21, NSE1, NSE3, NSE4, NSE5, SMC5 and SMC6.</text>
</comment>
<comment type="interaction">
    <interactant intactId="EBI-15099">
        <id>Q12749</id>
    </interactant>
    <interactant intactId="EBI-30144">
        <id>Q07913</id>
        <label>NSE1</label>
    </interactant>
    <organismsDiffer>false</organismsDiffer>
    <experiments>5</experiments>
</comment>
<comment type="subcellular location">
    <subcellularLocation>
        <location>Nucleus</location>
    </subcellularLocation>
    <subcellularLocation>
        <location>Chromosome</location>
    </subcellularLocation>
</comment>
<comment type="domain">
    <text evidence="1">The flexible hinge domain, which separates the large intramolecular coiled coil regions, allows the heterotypic interaction with the corresponding domain of SMC5, forming a V-shaped heterodimer.</text>
</comment>
<comment type="miscellaneous">
    <text evidence="4">Present with 339 molecules/cell in log phase SD medium.</text>
</comment>
<comment type="similarity">
    <text evidence="7">Belongs to the SMC family. SMC6 subfamily.</text>
</comment>
<accession>Q12749</accession>
<accession>D6VZ18</accession>
<dbReference type="EMBL" id="X80930">
    <property type="protein sequence ID" value="CAA56902.1"/>
    <property type="molecule type" value="Genomic_DNA"/>
</dbReference>
<dbReference type="EMBL" id="U19104">
    <property type="protein sequence ID" value="AAB67273.1"/>
    <property type="molecule type" value="Genomic_DNA"/>
</dbReference>
<dbReference type="EMBL" id="X05143">
    <property type="protein sequence ID" value="CAA28789.1"/>
    <property type="molecule type" value="Genomic_DNA"/>
</dbReference>
<dbReference type="EMBL" id="BK006945">
    <property type="protein sequence ID" value="DAA09684.1"/>
    <property type="molecule type" value="Genomic_DNA"/>
</dbReference>
<dbReference type="PIR" id="S51470">
    <property type="entry name" value="S51470"/>
</dbReference>
<dbReference type="RefSeq" id="NP_013487.1">
    <property type="nucleotide sequence ID" value="NM_001182272.1"/>
</dbReference>
<dbReference type="PDB" id="7QCD">
    <property type="method" value="EM"/>
    <property type="resolution" value="8.00 A"/>
    <property type="chains" value="B=1-1114"/>
</dbReference>
<dbReference type="PDB" id="7TVE">
    <property type="method" value="EM"/>
    <property type="resolution" value="3.80 A"/>
    <property type="chains" value="D=1-1114"/>
</dbReference>
<dbReference type="PDB" id="7YLM">
    <property type="method" value="EM"/>
    <property type="resolution" value="6.17 A"/>
    <property type="chains" value="B=1-1114"/>
</dbReference>
<dbReference type="PDB" id="7YQH">
    <property type="method" value="EM"/>
    <property type="resolution" value="5.60 A"/>
    <property type="chains" value="B=1-1114"/>
</dbReference>
<dbReference type="PDB" id="8HQS">
    <property type="method" value="EM"/>
    <property type="resolution" value="3.20 A"/>
    <property type="chains" value="B=1-1114"/>
</dbReference>
<dbReference type="PDB" id="8I21">
    <property type="method" value="EM"/>
    <property type="resolution" value="6.02 A"/>
    <property type="chains" value="B=1-1114"/>
</dbReference>
<dbReference type="PDB" id="8I4U">
    <property type="method" value="EM"/>
    <property type="resolution" value="6.73 A"/>
    <property type="chains" value="B=1-1114"/>
</dbReference>
<dbReference type="PDB" id="8I4V">
    <property type="method" value="EM"/>
    <property type="resolution" value="5.97 A"/>
    <property type="chains" value="B=1-1114"/>
</dbReference>
<dbReference type="PDB" id="8I4W">
    <property type="method" value="EM"/>
    <property type="resolution" value="6.01 A"/>
    <property type="chains" value="B=1-1114"/>
</dbReference>
<dbReference type="PDB" id="8I4X">
    <property type="method" value="EM"/>
    <property type="resolution" value="8.50 A"/>
    <property type="chains" value="B=1-1104"/>
</dbReference>
<dbReference type="PDB" id="8T8E">
    <property type="method" value="EM"/>
    <property type="resolution" value="3.30 A"/>
    <property type="chains" value="A=1-1114"/>
</dbReference>
<dbReference type="PDB" id="8T8F">
    <property type="method" value="EM"/>
    <property type="resolution" value="4.80 A"/>
    <property type="chains" value="E=1-1114"/>
</dbReference>
<dbReference type="PDB" id="8WJL">
    <property type="method" value="EM"/>
    <property type="resolution" value="6.15 A"/>
    <property type="chains" value="B=1-1114"/>
</dbReference>
<dbReference type="PDB" id="8WJN">
    <property type="method" value="EM"/>
    <property type="resolution" value="5.58 A"/>
    <property type="chains" value="B=1-1114"/>
</dbReference>
<dbReference type="PDB" id="8WJO">
    <property type="method" value="EM"/>
    <property type="resolution" value="6.04 A"/>
    <property type="chains" value="B=1-1114"/>
</dbReference>
<dbReference type="PDBsum" id="7QCD"/>
<dbReference type="PDBsum" id="7TVE"/>
<dbReference type="PDBsum" id="7YLM"/>
<dbReference type="PDBsum" id="7YQH"/>
<dbReference type="PDBsum" id="8HQS"/>
<dbReference type="PDBsum" id="8I21"/>
<dbReference type="PDBsum" id="8I4U"/>
<dbReference type="PDBsum" id="8I4V"/>
<dbReference type="PDBsum" id="8I4W"/>
<dbReference type="PDBsum" id="8I4X"/>
<dbReference type="PDBsum" id="8T8E"/>
<dbReference type="PDBsum" id="8T8F"/>
<dbReference type="PDBsum" id="8WJL"/>
<dbReference type="PDBsum" id="8WJN"/>
<dbReference type="PDBsum" id="8WJO"/>
<dbReference type="EMDB" id="EMD-13895"/>
<dbReference type="EMDB" id="EMD-26140"/>
<dbReference type="EMDB" id="EMD-34025"/>
<dbReference type="EMDB" id="EMD-34953"/>
<dbReference type="EMDB" id="EMD-35128"/>
<dbReference type="EMDB" id="EMD-35184"/>
<dbReference type="EMDB" id="EMD-35185"/>
<dbReference type="EMDB" id="EMD-35186"/>
<dbReference type="EMDB" id="EMD-35187"/>
<dbReference type="EMDB" id="EMD-37584"/>
<dbReference type="EMDB" id="EMD-37586"/>
<dbReference type="EMDB" id="EMD-37587"/>
<dbReference type="EMDB" id="EMD-41097"/>
<dbReference type="EMDB" id="EMD-41098"/>
<dbReference type="SMR" id="Q12749"/>
<dbReference type="BioGRID" id="31642">
    <property type="interactions" value="405"/>
</dbReference>
<dbReference type="ComplexPortal" id="CPX-1364">
    <property type="entry name" value="SMC5-SMC6 SUMO ligase complex"/>
</dbReference>
<dbReference type="DIP" id="DIP-6624N"/>
<dbReference type="FunCoup" id="Q12749">
    <property type="interactions" value="1000"/>
</dbReference>
<dbReference type="IntAct" id="Q12749">
    <property type="interactions" value="47"/>
</dbReference>
<dbReference type="STRING" id="4932.YLR383W"/>
<dbReference type="iPTMnet" id="Q12749"/>
<dbReference type="PaxDb" id="4932-YLR383W"/>
<dbReference type="PeptideAtlas" id="Q12749"/>
<dbReference type="EnsemblFungi" id="YLR383W_mRNA">
    <property type="protein sequence ID" value="YLR383W"/>
    <property type="gene ID" value="YLR383W"/>
</dbReference>
<dbReference type="GeneID" id="851099"/>
<dbReference type="KEGG" id="sce:YLR383W"/>
<dbReference type="AGR" id="SGD:S000004375"/>
<dbReference type="SGD" id="S000004375">
    <property type="gene designation" value="SMC6"/>
</dbReference>
<dbReference type="VEuPathDB" id="FungiDB:YLR383W"/>
<dbReference type="eggNOG" id="KOG0250">
    <property type="taxonomic scope" value="Eukaryota"/>
</dbReference>
<dbReference type="GeneTree" id="ENSGT00550000074816"/>
<dbReference type="HOGENOM" id="CLU_009063_0_0_1"/>
<dbReference type="InParanoid" id="Q12749"/>
<dbReference type="OMA" id="MCHDHFY"/>
<dbReference type="OrthoDB" id="10265785at2759"/>
<dbReference type="BioCyc" id="YEAST:G3O-32449-MONOMER"/>
<dbReference type="Reactome" id="R-SCE-3108214">
    <property type="pathway name" value="SUMOylation of DNA damage response and repair proteins"/>
</dbReference>
<dbReference type="BioGRID-ORCS" id="851099">
    <property type="hits" value="1 hit in 10 CRISPR screens"/>
</dbReference>
<dbReference type="PRO" id="PR:Q12749"/>
<dbReference type="Proteomes" id="UP000002311">
    <property type="component" value="Chromosome XII"/>
</dbReference>
<dbReference type="RNAct" id="Q12749">
    <property type="molecule type" value="protein"/>
</dbReference>
<dbReference type="GO" id="GO:0000781">
    <property type="term" value="C:chromosome, telomeric region"/>
    <property type="evidence" value="ECO:0000303"/>
    <property type="project" value="ComplexPortal"/>
</dbReference>
<dbReference type="GO" id="GO:0005739">
    <property type="term" value="C:mitochondrion"/>
    <property type="evidence" value="ECO:0007005"/>
    <property type="project" value="SGD"/>
</dbReference>
<dbReference type="GO" id="GO:0005634">
    <property type="term" value="C:nucleus"/>
    <property type="evidence" value="ECO:0000314"/>
    <property type="project" value="SGD"/>
</dbReference>
<dbReference type="GO" id="GO:0035861">
    <property type="term" value="C:site of double-strand break"/>
    <property type="evidence" value="ECO:0000314"/>
    <property type="project" value="SGD"/>
</dbReference>
<dbReference type="GO" id="GO:0030915">
    <property type="term" value="C:Smc5-Smc6 complex"/>
    <property type="evidence" value="ECO:0000314"/>
    <property type="project" value="SGD"/>
</dbReference>
<dbReference type="GO" id="GO:0005524">
    <property type="term" value="F:ATP binding"/>
    <property type="evidence" value="ECO:0007669"/>
    <property type="project" value="UniProtKB-KW"/>
</dbReference>
<dbReference type="GO" id="GO:0016887">
    <property type="term" value="F:ATP hydrolysis activity"/>
    <property type="evidence" value="ECO:0007669"/>
    <property type="project" value="InterPro"/>
</dbReference>
<dbReference type="GO" id="GO:0003684">
    <property type="term" value="F:damaged DNA binding"/>
    <property type="evidence" value="ECO:0000314"/>
    <property type="project" value="SGD"/>
</dbReference>
<dbReference type="GO" id="GO:0003697">
    <property type="term" value="F:single-stranded DNA binding"/>
    <property type="evidence" value="ECO:0000318"/>
    <property type="project" value="GO_Central"/>
</dbReference>
<dbReference type="GO" id="GO:0140588">
    <property type="term" value="P:chromatin looping"/>
    <property type="evidence" value="ECO:0000303"/>
    <property type="project" value="ComplexPortal"/>
</dbReference>
<dbReference type="GO" id="GO:0051304">
    <property type="term" value="P:chromosome separation"/>
    <property type="evidence" value="ECO:0000315"/>
    <property type="project" value="SGD"/>
</dbReference>
<dbReference type="GO" id="GO:1990683">
    <property type="term" value="P:DNA double-strand break attachment to nuclear envelope"/>
    <property type="evidence" value="ECO:0000315"/>
    <property type="project" value="SGD"/>
</dbReference>
<dbReference type="GO" id="GO:0006281">
    <property type="term" value="P:DNA repair"/>
    <property type="evidence" value="ECO:0000314"/>
    <property type="project" value="SGD"/>
</dbReference>
<dbReference type="GO" id="GO:0000724">
    <property type="term" value="P:double-strand break repair via homologous recombination"/>
    <property type="evidence" value="ECO:0000315"/>
    <property type="project" value="SGD"/>
</dbReference>
<dbReference type="GO" id="GO:0032204">
    <property type="term" value="P:regulation of telomere maintenance"/>
    <property type="evidence" value="ECO:0000303"/>
    <property type="project" value="ComplexPortal"/>
</dbReference>
<dbReference type="GO" id="GO:0071139">
    <property type="term" value="P:resolution of DNA recombination intermediates"/>
    <property type="evidence" value="ECO:0000315"/>
    <property type="project" value="SGD"/>
</dbReference>
<dbReference type="FunFam" id="3.40.50.300:FF:002784">
    <property type="entry name" value="Structural maintenance of chromosomes"/>
    <property type="match status" value="1"/>
</dbReference>
<dbReference type="Gene3D" id="1.10.287.1490">
    <property type="match status" value="1"/>
</dbReference>
<dbReference type="Gene3D" id="3.40.50.300">
    <property type="entry name" value="P-loop containing nucleotide triphosphate hydrolases"/>
    <property type="match status" value="2"/>
</dbReference>
<dbReference type="InterPro" id="IPR027417">
    <property type="entry name" value="P-loop_NTPase"/>
</dbReference>
<dbReference type="InterPro" id="IPR038729">
    <property type="entry name" value="Rad50/SbcC_AAA"/>
</dbReference>
<dbReference type="PANTHER" id="PTHR19306">
    <property type="entry name" value="STRUCTURAL MAINTENANCE OF CHROMOSOMES 5,6 SMC5, SMC6"/>
    <property type="match status" value="1"/>
</dbReference>
<dbReference type="PANTHER" id="PTHR19306:SF6">
    <property type="entry name" value="STRUCTURAL MAINTENANCE OF CHROMOSOMES PROTEIN 6"/>
    <property type="match status" value="1"/>
</dbReference>
<dbReference type="Pfam" id="PF13476">
    <property type="entry name" value="AAA_23"/>
    <property type="match status" value="1"/>
</dbReference>
<dbReference type="SUPFAM" id="SSF52540">
    <property type="entry name" value="P-loop containing nucleoside triphosphate hydrolases"/>
    <property type="match status" value="3"/>
</dbReference>
<proteinExistence type="evidence at protein level"/>
<keyword id="KW-0002">3D-structure</keyword>
<keyword id="KW-0067">ATP-binding</keyword>
<keyword id="KW-0158">Chromosome</keyword>
<keyword id="KW-0175">Coiled coil</keyword>
<keyword id="KW-0227">DNA damage</keyword>
<keyword id="KW-0233">DNA recombination</keyword>
<keyword id="KW-0234">DNA repair</keyword>
<keyword id="KW-0547">Nucleotide-binding</keyword>
<keyword id="KW-0539">Nucleus</keyword>
<keyword id="KW-1185">Reference proteome</keyword>
<sequence>MISTTISGKRPIEQVDDELLSLTAQQENEEQQQQRKRRRHQFAPMTQFNSNTLDEDSGFRSSSDVATADQDNFLEESPSGYIKKVILRNFMCHEHFELELGSRLNFIVGNNGSGKSAILTAITIGLGAKASETNRGSSLKDLIREGCYSAKIILHLDNSKYGAYQQGIFGNEIIVERIIKRDGPASFSLRSENGKEISNKKKDIQTVVDYFSVPVSNPMCFLSQDAARSFLTASTSQDKYSHFMKGTLLQEITENLLYASAIHDSAQENMALHLENLKSLKAEYEDAKKLLRELNQTSDLNERKMLLQAKSLWIDVAHNTDACKNLENEISGIQQKVDEVTEKIRNRQEKIERYTSDGTTIEAQIDAKVIYVNEKDSEHQNARELLRDVKSRFEKEKSNQAEAQSNIDQGRKKVDALNKTIAHLEEELTKEMGGDKDQMRQELEQLEKANEKLREVNNSLVVSLQDVKNEERDIQHERESELRTISRSIQNKKVELQNIAKGNDTFLMNFDRNMDRLLRTIEQRKNEFETPAIGPLGSLVTIRKGFEKWTRSIQRAISSSLNAFVVSNPKDNRLFRDIMRSCGIRSNIPIVTYCLSQFDYSKGRAHGNYPTIVDALEFSKPEIECLFVDLSRIERIVLIEDKNEARNFLQRNPVNVNMALSLRDRRSGFQLSGGYRLDTVTYQDKIRLKVNSSSDNGTQYLKDLIEQETKELQNIRDRYEEKLSEVRSRLKEIDGRLKSTKNEMRKTNFRMTELKMNVGKVVDTGILNSKINERKNQEQAIASYEAAKEELGLKIEQIAQEAQPIKEQYDSTKLALVEAQDELQQLKEDINSRQSKIQKYKDDTIYYEDKKKVYLENIKKIEVNVAALKEGIQRQIQNACAFCSKERIENVDLPDTQEEIKRELDKVSRMIQKAEKSLGLSQEEVIALFEKCRNKYKEGQKKYMEIDEALNRLHNSLKARDQNYKNAEKGTCFDADMDFRASLKVRKFSGNLSFIKDTKSLEIYILTTNDEKARNVDTLSGGEKSFSQMALLLATWKPMRSRIIALDEFDVFMDQVNRKIGTTLIVKKLKDIARTQTIIITPQDIGKIADIDSSGVSIHRMRDPERQNNSNFYN</sequence>
<feature type="chain" id="PRO_0000119022" description="Structural maintenance of chromosomes protein 6">
    <location>
        <begin position="1"/>
        <end position="1114"/>
    </location>
</feature>
<feature type="region of interest" description="Disordered" evidence="3">
    <location>
        <begin position="26"/>
        <end position="64"/>
    </location>
</feature>
<feature type="region of interest" description="Flexible hinge">
    <location>
        <begin position="530"/>
        <end position="695"/>
    </location>
</feature>
<feature type="coiled-coil region" evidence="2">
    <location>
        <begin position="259"/>
        <end position="529"/>
    </location>
</feature>
<feature type="coiled-coil region" evidence="2">
    <location>
        <begin position="696"/>
        <end position="969"/>
    </location>
</feature>
<feature type="short sequence motif" description="Nuclear localization signal" evidence="2">
    <location>
        <begin position="35"/>
        <end position="39"/>
    </location>
</feature>
<feature type="binding site" evidence="2">
    <location>
        <begin position="109"/>
        <end position="116"/>
    </location>
    <ligand>
        <name>ATP</name>
        <dbReference type="ChEBI" id="CHEBI:30616"/>
    </ligand>
</feature>
<feature type="helix" evidence="8">
    <location>
        <begin position="13"/>
        <end position="35"/>
    </location>
</feature>
<feature type="strand" evidence="8">
    <location>
        <begin position="82"/>
        <end position="93"/>
    </location>
</feature>
<feature type="strand" evidence="8">
    <location>
        <begin position="95"/>
        <end position="98"/>
    </location>
</feature>
<feature type="strand" evidence="8">
    <location>
        <begin position="102"/>
        <end position="107"/>
    </location>
</feature>
<feature type="helix" evidence="8">
    <location>
        <begin position="117"/>
        <end position="126"/>
    </location>
</feature>
<feature type="helix" evidence="8">
    <location>
        <begin position="130"/>
        <end position="133"/>
    </location>
</feature>
<feature type="strand" evidence="8">
    <location>
        <begin position="136"/>
        <end position="138"/>
    </location>
</feature>
<feature type="helix" evidence="8">
    <location>
        <begin position="139"/>
        <end position="142"/>
    </location>
</feature>
<feature type="strand" evidence="8">
    <location>
        <begin position="148"/>
        <end position="157"/>
    </location>
</feature>
<feature type="strand" evidence="8">
    <location>
        <begin position="159"/>
        <end position="162"/>
    </location>
</feature>
<feature type="helix" evidence="8">
    <location>
        <begin position="166"/>
        <end position="169"/>
    </location>
</feature>
<feature type="strand" evidence="8">
    <location>
        <begin position="172"/>
        <end position="183"/>
    </location>
</feature>
<feature type="strand" evidence="8">
    <location>
        <begin position="186"/>
        <end position="188"/>
    </location>
</feature>
<feature type="helix" evidence="8">
    <location>
        <begin position="202"/>
        <end position="211"/>
    </location>
</feature>
<feature type="strand" evidence="8">
    <location>
        <begin position="215"/>
        <end position="217"/>
    </location>
</feature>
<feature type="turn" evidence="8">
    <location>
        <begin position="218"/>
        <end position="220"/>
    </location>
</feature>
<feature type="helix" evidence="8">
    <location>
        <begin position="224"/>
        <end position="231"/>
    </location>
</feature>
<feature type="helix" evidence="8">
    <location>
        <begin position="236"/>
        <end position="246"/>
    </location>
</feature>
<feature type="helix" evidence="8">
    <location>
        <begin position="250"/>
        <end position="279"/>
    </location>
</feature>
<feature type="helix" evidence="8">
    <location>
        <begin position="940"/>
        <end position="983"/>
    </location>
</feature>
<feature type="helix" evidence="8">
    <location>
        <begin position="984"/>
        <end position="986"/>
    </location>
</feature>
<feature type="strand" evidence="8">
    <location>
        <begin position="989"/>
        <end position="995"/>
    </location>
</feature>
<feature type="turn" evidence="8">
    <location>
        <begin position="996"/>
        <end position="999"/>
    </location>
</feature>
<feature type="strand" evidence="8">
    <location>
        <begin position="1000"/>
        <end position="1006"/>
    </location>
</feature>
<feature type="helix" evidence="8">
    <location>
        <begin position="1021"/>
        <end position="1036"/>
    </location>
</feature>
<feature type="strand" evidence="8">
    <location>
        <begin position="1042"/>
        <end position="1046"/>
    </location>
</feature>
<feature type="helix" evidence="8">
    <location>
        <begin position="1050"/>
        <end position="1052"/>
    </location>
</feature>
<feature type="helix" evidence="8">
    <location>
        <begin position="1056"/>
        <end position="1070"/>
    </location>
</feature>
<feature type="strand" evidence="8">
    <location>
        <begin position="1076"/>
        <end position="1080"/>
    </location>
</feature>
<feature type="helix" evidence="8">
    <location>
        <begin position="1085"/>
        <end position="1087"/>
    </location>
</feature>
<feature type="strand" evidence="8">
    <location>
        <begin position="1096"/>
        <end position="1099"/>
    </location>
</feature>